<name>ACTB_MESAU</name>
<keyword id="KW-0007">Acetylation</keyword>
<keyword id="KW-0067">ATP-binding</keyword>
<keyword id="KW-0963">Cytoplasm</keyword>
<keyword id="KW-0206">Cytoskeleton</keyword>
<keyword id="KW-0378">Hydrolase</keyword>
<keyword id="KW-0488">Methylation</keyword>
<keyword id="KW-0547">Nucleotide-binding</keyword>
<keyword id="KW-0539">Nucleus</keyword>
<keyword id="KW-0558">Oxidation</keyword>
<keyword id="KW-1185">Reference proteome</keyword>
<keyword id="KW-0832">Ubl conjugation</keyword>
<protein>
    <recommendedName>
        <fullName>Actin, cytoplasmic 1</fullName>
        <ecNumber evidence="4">3.6.4.-</ecNumber>
    </recommendedName>
    <alternativeName>
        <fullName>Beta-actin</fullName>
    </alternativeName>
    <component>
        <recommendedName>
            <fullName>Actin, cytoplasmic 1, N-terminally processed</fullName>
        </recommendedName>
    </component>
</protein>
<organism>
    <name type="scientific">Mesocricetus auratus</name>
    <name type="common">Golden hamster</name>
    <dbReference type="NCBI Taxonomy" id="10036"/>
    <lineage>
        <taxon>Eukaryota</taxon>
        <taxon>Metazoa</taxon>
        <taxon>Chordata</taxon>
        <taxon>Craniata</taxon>
        <taxon>Vertebrata</taxon>
        <taxon>Euteleostomi</taxon>
        <taxon>Mammalia</taxon>
        <taxon>Eutheria</taxon>
        <taxon>Euarchontoglires</taxon>
        <taxon>Glires</taxon>
        <taxon>Rodentia</taxon>
        <taxon>Myomorpha</taxon>
        <taxon>Muroidea</taxon>
        <taxon>Cricetidae</taxon>
        <taxon>Cricetinae</taxon>
        <taxon>Mesocricetus</taxon>
    </lineage>
</organism>
<comment type="function">
    <text evidence="2 5">Actin is a highly conserved protein that polymerizes to produce filaments that form cross-linked networks in the cytoplasm of cells (By similarity). Actin exists in both monomeric (G-actin) and polymeric (F-actin) forms, both forms playing key functions, such as cell motility and contraction (By similarity). In addition to their role in the cytoplasmic cytoskeleton, G- and F-actin also localize in the nucleus, and regulate gene transcription and motility and repair of damaged DNA (By similarity). Plays a role in the assembly of the gamma-tubulin ring complex (gTuRC), which regulates the minus-end nucleation of alpha-beta tubulin heterodimers that grow into microtubule protafilaments (By similarity). Part of the ACTR1A/ACTB filament around which the dynactin complex is built (By similarity). The dynactin multiprotein complex activates the molecular motor dynein for ultra-processive transport along microtubules (By similarity).</text>
</comment>
<comment type="catalytic activity">
    <reaction evidence="4">
        <text>ATP + H2O = ADP + phosphate + H(+)</text>
        <dbReference type="Rhea" id="RHEA:13065"/>
        <dbReference type="ChEBI" id="CHEBI:15377"/>
        <dbReference type="ChEBI" id="CHEBI:15378"/>
        <dbReference type="ChEBI" id="CHEBI:30616"/>
        <dbReference type="ChEBI" id="CHEBI:43474"/>
        <dbReference type="ChEBI" id="CHEBI:456216"/>
    </reaction>
</comment>
<comment type="subunit">
    <text evidence="1 2 3 5">Polymerization of globular actin (G-actin) leads to a structural filament (F-actin) in the form of a two-stranded helix (By similarity). Each actin can bind to 4 others (By similarity). Identified in a IGF2BP1-dependent mRNP granule complex containing untranslated mRNAs (By similarity). Component of the BAF complex, which includes at least actin (ACTB), ARID1A, ARID1B/BAF250, SMARCA2, SMARCA4/BRG1, ACTL6A/BAF53, ACTL6B/BAF53B, SMARCE1/BAF57 SMARCC1/BAF155, SMARCC2/BAF170, SMARCB1/SNF5/INI1, and one or more of SMARCD1/BAF60A, SMARCD2/BAF60B, or SMARCD3/BAF60C (By similarity). In muscle cells, the BAF complex also contains DPF3 (By similarity). Found in a complex with XPO6, Ran, ACTB and PFN1 (By similarity). Interacts with PFN1 (By similarity). Interacts with XPO6 and EMD (By similarity). Interacts with ERBB2 (By similarity). Interacts with GCSAM (By similarity). Interacts with TBC1D21 (By similarity). Interacts with CPNE1 (via VWFA domain) and CPNE4 (via VWFA domain) (By similarity). Interacts with DHX9 (via C-terminus); this interaction is direct and mediates the attachment to nuclear ribonucleoprotein complexes (By similarity). Interacts with FAM107A (By similarity). Associates with the gamma-tubulin ring complex (gTuRC) consisting of TUBGCP2, TUBGCP3, TUBGCP4, TUBGCP5 and TUBGCP6 and gamma-tubulin TUBG1 or TUBG2; within the complex, interacts with TUBGCP3 and TUBGCP6 to form a luminal bridge with MZT1 that stabilizes the initial structure during complex assembly (By similarity). Part of the ACTR1A/ACTB filament around which the dynactin complex is built (By similarity). The filament contains 8 copies of ACTR1A and 1 ACTB (By similarity). Interacts with TPRN which forms ring-like structures in the stereocilium taper region; the interaction may stabilize stereocilia in inner ear hair cells (By similarity). Interacts with AMOTL2 (via N-terminus), the interaction facilitates binding of cell junction complexes to actin fibers in endothelial cells (By similarity).</text>
</comment>
<comment type="subcellular location">
    <subcellularLocation>
        <location evidence="2">Cytoplasm</location>
        <location evidence="2">Cytoskeleton</location>
    </subcellularLocation>
    <subcellularLocation>
        <location evidence="2">Nucleus</location>
    </subcellularLocation>
    <text evidence="2">Localized in cytoplasmic mRNP granules containing untranslated mRNAs.</text>
</comment>
<comment type="PTM">
    <molecule>Actin, cytoplasmic 1</molecule>
    <text evidence="2">N-terminal cleavage of acetylated methionine of immature cytoplasmic actin by ACTMAP.</text>
</comment>
<comment type="PTM">
    <text evidence="2">ISGylated.</text>
</comment>
<comment type="PTM">
    <text evidence="3">Oxidation of Met-44 and Met-47 by MICALs (MICAL1, MICAL2 or MICAL3) to form methionine sulfoxide promotes actin filament depolymerization. MICAL1 and MICAL2 produce the (R)-S-oxide form. The (R)-S-oxide form is reverted by MSRB1 and MSRB2, which promote actin repolymerization.</text>
</comment>
<comment type="PTM">
    <text evidence="2">Monomethylation at Lys-84 (K84me1) regulates actin-myosin interaction and actomyosin-dependent processes. Demethylation by ALKBH4 is required for maintaining actomyosin dynamics supporting normal cleavage furrow ingression during cytokinesis and cell migration.</text>
</comment>
<comment type="PTM">
    <molecule>Actin, cytoplasmic 1, N-terminally processed</molecule>
    <text evidence="2">N-terminal acetylation by NAA80 affects actin filament depolymerization and elongation, including elongation driven by formins. In contrast, filament nucleation by the Arp2/3 complex is not affected.</text>
</comment>
<comment type="PTM">
    <text evidence="2 3">Methylated at His-73 by SETD3 (By similarity). Methylation at His-73 is required for smooth muscle contraction of the laboring uterus during delivery (By similarity).</text>
</comment>
<comment type="miscellaneous">
    <text evidence="2">In vertebrates 3 main groups of actin isoforms, alpha, beta and gamma have been identified. The alpha actins are found in muscle tissues and are a major constituent of the contractile apparatus. The beta and gamma actins coexist in most cell types as components of the cytoskeleton and as mediators of internal cell motility.</text>
</comment>
<comment type="similarity">
    <text evidence="6">Belongs to the actin family.</text>
</comment>
<proteinExistence type="evidence at protein level"/>
<gene>
    <name type="primary">ACTB</name>
</gene>
<feature type="chain" id="PRO_0000000773" description="Actin, cytoplasmic 1">
    <location>
        <begin position="1"/>
        <end position="375"/>
    </location>
</feature>
<feature type="initiator methionine" description="Removed; alternate" evidence="2">
    <location>
        <position position="1"/>
    </location>
</feature>
<feature type="chain" id="PRO_0000367075" description="Actin, cytoplasmic 1, N-terminally processed">
    <location>
        <begin position="2"/>
        <end position="375"/>
    </location>
</feature>
<feature type="modified residue" description="N-acetylmethionine" evidence="2">
    <location>
        <position position="1"/>
    </location>
</feature>
<feature type="modified residue" description="N-acetylaspartate; in Actin, cytoplasmic 1, N-terminally processed" evidence="2">
    <location>
        <position position="2"/>
    </location>
</feature>
<feature type="modified residue" description="Methionine (R)-sulfoxide" evidence="3">
    <location>
        <position position="44"/>
    </location>
</feature>
<feature type="modified residue" description="Methionine (R)-sulfoxide" evidence="3">
    <location>
        <position position="47"/>
    </location>
</feature>
<feature type="modified residue" description="Tele-methylhistidine" evidence="3">
    <location>
        <position position="73"/>
    </location>
</feature>
<feature type="modified residue" description="N6-methyllysine" evidence="2">
    <location>
        <position position="84"/>
    </location>
</feature>
<dbReference type="EC" id="3.6.4.-" evidence="4"/>
<dbReference type="EMBL" id="AJ312092">
    <property type="protein sequence ID" value="CAC38394.1"/>
    <property type="molecule type" value="mRNA"/>
</dbReference>
<dbReference type="RefSeq" id="NP_001268524.1">
    <property type="nucleotide sequence ID" value="NM_001281595.1"/>
</dbReference>
<dbReference type="RefSeq" id="XP_012975858.1">
    <property type="nucleotide sequence ID" value="XM_013120404.1"/>
</dbReference>
<dbReference type="SMR" id="Q711N9"/>
<dbReference type="STRING" id="10036.ENSMAUP00000006968"/>
<dbReference type="Ensembl" id="ENSMAUT00000010774">
    <property type="protein sequence ID" value="ENSMAUP00000006968"/>
    <property type="gene ID" value="ENSMAUG00000008763"/>
</dbReference>
<dbReference type="GeneID" id="101844587"/>
<dbReference type="KEGG" id="maua:101844587"/>
<dbReference type="CTD" id="60"/>
<dbReference type="eggNOG" id="KOG0676">
    <property type="taxonomic scope" value="Eukaryota"/>
</dbReference>
<dbReference type="OrthoDB" id="9546537at2759"/>
<dbReference type="Proteomes" id="UP000189706">
    <property type="component" value="Unplaced"/>
</dbReference>
<dbReference type="GO" id="GO:0015629">
    <property type="term" value="C:actin cytoskeleton"/>
    <property type="evidence" value="ECO:0000250"/>
    <property type="project" value="UniProtKB"/>
</dbReference>
<dbReference type="GO" id="GO:0005912">
    <property type="term" value="C:adherens junction"/>
    <property type="evidence" value="ECO:0007669"/>
    <property type="project" value="Ensembl"/>
</dbReference>
<dbReference type="GO" id="GO:0043296">
    <property type="term" value="C:apical junction complex"/>
    <property type="evidence" value="ECO:0007669"/>
    <property type="project" value="Ensembl"/>
</dbReference>
<dbReference type="GO" id="GO:0005903">
    <property type="term" value="C:brush border"/>
    <property type="evidence" value="ECO:0007669"/>
    <property type="project" value="Ensembl"/>
</dbReference>
<dbReference type="GO" id="GO:0044305">
    <property type="term" value="C:calyx of Held"/>
    <property type="evidence" value="ECO:0007669"/>
    <property type="project" value="Ensembl"/>
</dbReference>
<dbReference type="GO" id="GO:0030863">
    <property type="term" value="C:cortical cytoskeleton"/>
    <property type="evidence" value="ECO:0007669"/>
    <property type="project" value="Ensembl"/>
</dbReference>
<dbReference type="GO" id="GO:0036464">
    <property type="term" value="C:cytoplasmic ribonucleoprotein granule"/>
    <property type="evidence" value="ECO:0007669"/>
    <property type="project" value="Ensembl"/>
</dbReference>
<dbReference type="GO" id="GO:0005856">
    <property type="term" value="C:cytoskeleton"/>
    <property type="evidence" value="ECO:0000250"/>
    <property type="project" value="AgBase"/>
</dbReference>
<dbReference type="GO" id="GO:0005829">
    <property type="term" value="C:cytosol"/>
    <property type="evidence" value="ECO:0007669"/>
    <property type="project" value="Ensembl"/>
</dbReference>
<dbReference type="GO" id="GO:0097433">
    <property type="term" value="C:dense body"/>
    <property type="evidence" value="ECO:0000250"/>
    <property type="project" value="AgBase"/>
</dbReference>
<dbReference type="GO" id="GO:0005925">
    <property type="term" value="C:focal adhesion"/>
    <property type="evidence" value="ECO:0000250"/>
    <property type="project" value="AgBase"/>
</dbReference>
<dbReference type="GO" id="GO:0098978">
    <property type="term" value="C:glutamatergic synapse"/>
    <property type="evidence" value="ECO:0007669"/>
    <property type="project" value="Ensembl"/>
</dbReference>
<dbReference type="GO" id="GO:0030027">
    <property type="term" value="C:lamellipodium"/>
    <property type="evidence" value="ECO:0007669"/>
    <property type="project" value="Ensembl"/>
</dbReference>
<dbReference type="GO" id="GO:0035267">
    <property type="term" value="C:NuA4 histone acetyltransferase complex"/>
    <property type="evidence" value="ECO:0007669"/>
    <property type="project" value="Ensembl"/>
</dbReference>
<dbReference type="GO" id="GO:0000786">
    <property type="term" value="C:nucleosome"/>
    <property type="evidence" value="ECO:0007669"/>
    <property type="project" value="Ensembl"/>
</dbReference>
<dbReference type="GO" id="GO:0005634">
    <property type="term" value="C:nucleus"/>
    <property type="evidence" value="ECO:0000250"/>
    <property type="project" value="UniProtKB"/>
</dbReference>
<dbReference type="GO" id="GO:0005886">
    <property type="term" value="C:plasma membrane"/>
    <property type="evidence" value="ECO:0000250"/>
    <property type="project" value="AgBase"/>
</dbReference>
<dbReference type="GO" id="GO:0098871">
    <property type="term" value="C:postsynaptic actin cytoskeleton"/>
    <property type="evidence" value="ECO:0007669"/>
    <property type="project" value="Ensembl"/>
</dbReference>
<dbReference type="GO" id="GO:0032991">
    <property type="term" value="C:protein-containing complex"/>
    <property type="evidence" value="ECO:0000250"/>
    <property type="project" value="UniProtKB"/>
</dbReference>
<dbReference type="GO" id="GO:1990904">
    <property type="term" value="C:ribonucleoprotein complex"/>
    <property type="evidence" value="ECO:0007669"/>
    <property type="project" value="Ensembl"/>
</dbReference>
<dbReference type="GO" id="GO:0098685">
    <property type="term" value="C:Schaffer collateral - CA1 synapse"/>
    <property type="evidence" value="ECO:0007669"/>
    <property type="project" value="Ensembl"/>
</dbReference>
<dbReference type="GO" id="GO:0070160">
    <property type="term" value="C:tight junction"/>
    <property type="evidence" value="ECO:0007669"/>
    <property type="project" value="Ensembl"/>
</dbReference>
<dbReference type="GO" id="GO:0005524">
    <property type="term" value="F:ATP binding"/>
    <property type="evidence" value="ECO:0007669"/>
    <property type="project" value="UniProtKB-KW"/>
</dbReference>
<dbReference type="GO" id="GO:0016887">
    <property type="term" value="F:ATP hydrolysis activity"/>
    <property type="evidence" value="ECO:0007669"/>
    <property type="project" value="Ensembl"/>
</dbReference>
<dbReference type="GO" id="GO:0042802">
    <property type="term" value="F:identical protein binding"/>
    <property type="evidence" value="ECO:0007669"/>
    <property type="project" value="Ensembl"/>
</dbReference>
<dbReference type="GO" id="GO:0019894">
    <property type="term" value="F:kinesin binding"/>
    <property type="evidence" value="ECO:0007669"/>
    <property type="project" value="Ensembl"/>
</dbReference>
<dbReference type="GO" id="GO:0050998">
    <property type="term" value="F:nitric-oxide synthase binding"/>
    <property type="evidence" value="ECO:0007669"/>
    <property type="project" value="Ensembl"/>
</dbReference>
<dbReference type="GO" id="GO:0030235">
    <property type="term" value="F:nitric-oxide synthase regulator activity"/>
    <property type="evidence" value="ECO:0007669"/>
    <property type="project" value="Ensembl"/>
</dbReference>
<dbReference type="GO" id="GO:0019901">
    <property type="term" value="F:protein kinase binding"/>
    <property type="evidence" value="ECO:0007669"/>
    <property type="project" value="Ensembl"/>
</dbReference>
<dbReference type="GO" id="GO:0098973">
    <property type="term" value="F:structural constituent of postsynaptic actin cytoskeleton"/>
    <property type="evidence" value="ECO:0007669"/>
    <property type="project" value="Ensembl"/>
</dbReference>
<dbReference type="GO" id="GO:0030957">
    <property type="term" value="F:Tat protein binding"/>
    <property type="evidence" value="ECO:0007669"/>
    <property type="project" value="Ensembl"/>
</dbReference>
<dbReference type="GO" id="GO:0141108">
    <property type="term" value="F:transporter regulator activity"/>
    <property type="evidence" value="ECO:0007669"/>
    <property type="project" value="Ensembl"/>
</dbReference>
<dbReference type="GO" id="GO:0034333">
    <property type="term" value="P:adherens junction assembly"/>
    <property type="evidence" value="ECO:0007669"/>
    <property type="project" value="Ensembl"/>
</dbReference>
<dbReference type="GO" id="GO:0045176">
    <property type="term" value="P:apical protein localization"/>
    <property type="evidence" value="ECO:0007669"/>
    <property type="project" value="Ensembl"/>
</dbReference>
<dbReference type="GO" id="GO:0048870">
    <property type="term" value="P:cell motility"/>
    <property type="evidence" value="ECO:0007669"/>
    <property type="project" value="Ensembl"/>
</dbReference>
<dbReference type="GO" id="GO:0072749">
    <property type="term" value="P:cellular response to cytochalasin B"/>
    <property type="evidence" value="ECO:0007669"/>
    <property type="project" value="Ensembl"/>
</dbReference>
<dbReference type="GO" id="GO:0007163">
    <property type="term" value="P:establishment or maintenance of cell polarity"/>
    <property type="evidence" value="ECO:0007669"/>
    <property type="project" value="Ensembl"/>
</dbReference>
<dbReference type="GO" id="GO:0001738">
    <property type="term" value="P:morphogenesis of a polarized epithelium"/>
    <property type="evidence" value="ECO:0007669"/>
    <property type="project" value="Ensembl"/>
</dbReference>
<dbReference type="GO" id="GO:1905168">
    <property type="term" value="P:positive regulation of double-strand break repair via homologous recombination"/>
    <property type="evidence" value="ECO:0007669"/>
    <property type="project" value="Ensembl"/>
</dbReference>
<dbReference type="GO" id="GO:0071896">
    <property type="term" value="P:protein localization to adherens junction"/>
    <property type="evidence" value="ECO:0007669"/>
    <property type="project" value="Ensembl"/>
</dbReference>
<dbReference type="GO" id="GO:0051726">
    <property type="term" value="P:regulation of cell cycle"/>
    <property type="evidence" value="ECO:0007669"/>
    <property type="project" value="Ensembl"/>
</dbReference>
<dbReference type="GO" id="GO:0051621">
    <property type="term" value="P:regulation of norepinephrine uptake"/>
    <property type="evidence" value="ECO:0007669"/>
    <property type="project" value="Ensembl"/>
</dbReference>
<dbReference type="GO" id="GO:1903076">
    <property type="term" value="P:regulation of protein localization to plasma membrane"/>
    <property type="evidence" value="ECO:0007669"/>
    <property type="project" value="Ensembl"/>
</dbReference>
<dbReference type="GO" id="GO:1900242">
    <property type="term" value="P:regulation of synaptic vesicle endocytosis"/>
    <property type="evidence" value="ECO:0007669"/>
    <property type="project" value="Ensembl"/>
</dbReference>
<dbReference type="GO" id="GO:0150111">
    <property type="term" value="P:regulation of transepithelial transport"/>
    <property type="evidence" value="ECO:0007669"/>
    <property type="project" value="Ensembl"/>
</dbReference>
<dbReference type="CDD" id="cd10224">
    <property type="entry name" value="ASKHA_NBD_actin"/>
    <property type="match status" value="1"/>
</dbReference>
<dbReference type="FunFam" id="3.30.420.40:FF:000131">
    <property type="entry name" value="Actin, alpha skeletal muscle"/>
    <property type="match status" value="1"/>
</dbReference>
<dbReference type="FunFam" id="3.30.420.40:FF:000291">
    <property type="entry name" value="Actin, alpha skeletal muscle"/>
    <property type="match status" value="1"/>
</dbReference>
<dbReference type="FunFam" id="3.90.640.10:FF:000047">
    <property type="entry name" value="Actin, alpha skeletal muscle"/>
    <property type="match status" value="1"/>
</dbReference>
<dbReference type="FunFam" id="3.30.420.40:FF:000058">
    <property type="entry name" value="Putative actin-related protein 5"/>
    <property type="match status" value="1"/>
</dbReference>
<dbReference type="Gene3D" id="3.30.420.40">
    <property type="match status" value="2"/>
</dbReference>
<dbReference type="Gene3D" id="3.90.640.10">
    <property type="entry name" value="Actin, Chain A, domain 4"/>
    <property type="match status" value="1"/>
</dbReference>
<dbReference type="InterPro" id="IPR004000">
    <property type="entry name" value="Actin"/>
</dbReference>
<dbReference type="InterPro" id="IPR020902">
    <property type="entry name" value="Actin/actin-like_CS"/>
</dbReference>
<dbReference type="InterPro" id="IPR004001">
    <property type="entry name" value="Actin_CS"/>
</dbReference>
<dbReference type="InterPro" id="IPR043129">
    <property type="entry name" value="ATPase_NBD"/>
</dbReference>
<dbReference type="PANTHER" id="PTHR11937">
    <property type="entry name" value="ACTIN"/>
    <property type="match status" value="1"/>
</dbReference>
<dbReference type="Pfam" id="PF00022">
    <property type="entry name" value="Actin"/>
    <property type="match status" value="1"/>
</dbReference>
<dbReference type="PRINTS" id="PR00190">
    <property type="entry name" value="ACTIN"/>
</dbReference>
<dbReference type="SMART" id="SM00268">
    <property type="entry name" value="ACTIN"/>
    <property type="match status" value="1"/>
</dbReference>
<dbReference type="SUPFAM" id="SSF53067">
    <property type="entry name" value="Actin-like ATPase domain"/>
    <property type="match status" value="2"/>
</dbReference>
<dbReference type="PROSITE" id="PS00406">
    <property type="entry name" value="ACTINS_1"/>
    <property type="match status" value="1"/>
</dbReference>
<dbReference type="PROSITE" id="PS00432">
    <property type="entry name" value="ACTINS_2"/>
    <property type="match status" value="1"/>
</dbReference>
<dbReference type="PROSITE" id="PS01132">
    <property type="entry name" value="ACTINS_ACT_LIKE"/>
    <property type="match status" value="1"/>
</dbReference>
<accession>Q711N9</accession>
<reference key="1">
    <citation type="submission" date="2001-05" db="EMBL/GenBank/DDBJ databases">
        <title>Sequence of the beta actin gene from baby hamster kidney (BHK-21) cells.</title>
        <authorList>
            <person name="Posthuma C.C."/>
        </authorList>
    </citation>
    <scope>NUCLEOTIDE SEQUENCE [MRNA]</scope>
    <source>
        <tissue>Kidney</tissue>
    </source>
</reference>
<reference key="2">
    <citation type="journal article" date="2010" name="Asian J. Androl.">
        <title>Glucose-regulated protein precursor (GRP78) and tumor rejection antigen (GP96) are unique to hamster caput epididymal spermatozoa.</title>
        <authorList>
            <person name="Kameshwari D.B."/>
            <person name="Bhande S."/>
            <person name="Sundaram C.S."/>
            <person name="Kota V."/>
            <person name="Siva A.B."/>
            <person name="Shivaji S."/>
        </authorList>
    </citation>
    <scope>IDENTIFICATION BY MASS SPECTROMETRY</scope>
</reference>
<evidence type="ECO:0000250" key="1">
    <source>
        <dbReference type="UniProtKB" id="O18840"/>
    </source>
</evidence>
<evidence type="ECO:0000250" key="2">
    <source>
        <dbReference type="UniProtKB" id="P60709"/>
    </source>
</evidence>
<evidence type="ECO:0000250" key="3">
    <source>
        <dbReference type="UniProtKB" id="P60710"/>
    </source>
</evidence>
<evidence type="ECO:0000250" key="4">
    <source>
        <dbReference type="UniProtKB" id="P68137"/>
    </source>
</evidence>
<evidence type="ECO:0000250" key="5">
    <source>
        <dbReference type="UniProtKB" id="Q6QAQ1"/>
    </source>
</evidence>
<evidence type="ECO:0000305" key="6"/>
<sequence>MDDDIAALVVDNGSGMCKAGFAGDDAPRAVFPSIVGRPRHQGVMVGMGQKDSYVGDEAQSKRGILTLKYPIEHGIVTNWDDMEKIWHHTFYNELRVAPEEHPVLLTEAPLNPKANREKMTQIMFETFNTPAMYVAIQAVLSLYASGRTTGIVMDSGDGVTHTVPIYEGYALPHAILRLDLAGRDLTDYLMKILTERGYSFTTTAEREIVRDIKEKLCYVALDFEQEMATAASSSSLEKSYELPDGQVITIGNERFRCPEALFQPSFLGMESCGIHETTFNSIMKCDVDIRKDLYANTVLSGGTTMYPGIADRMQKEITALAPSTMKIKIIAPPERKYSVWIGGSILASLSTFQQMWISKQEYDESGPSIVHRKCF</sequence>